<proteinExistence type="inferred from homology"/>
<sequence>MSERHAALTSLPPILPRLIRRFAVVIVLLWLGFTAFVNLAVPQLEVVGKAHSVSMSPSDAASIQAIKRVGQVFGEFDSDNAVTIVLEGDQPLGGDAHRFYSDLMRKLSADTRHVAHIQDFWGDPLTAAGSQSADDRAAYVVVYLVGNNETEAYDSVHAVRHMVDTTPPPHGVKAYVTGPAALNADQAEAGDKSIAKVTAITSMVIAAMLLVIYRSVITAVLVLIMVGIDLGAIRGFIALLADHNIFSLSTFATNLLVLMAIAASTDYAIFMLGRYHESRYAGEDRETAFYTMFHGTAHVILGSGLTIAGAMYCLSFARLPYFETLGAPIAIGMLVAVLAALTLGPAVLTVGSFFKLFDPKRRMNTRRWRRVGTAIVRWPGPVLAATCLVASIGLLALPSYRTTYDLRKFMPASMPSNVGDAAAGRHFSRARLNPEVLLIETDHDMRNPVDMLVLDKVAKNIYHSPGIEQVKAITRPLGTTIKHTSIPFIISMQGVNSSEQMEFMKDRIDDILVQVAAMNTSIETMHRMYALMGEVIDNTVDMDHLTHDMSDITATLRDHLADFEDFFRPIRSYFYWEKHCFDVPLCWSIRSIFDMFDSVDQLSEKLEYLVKDMDILITLLPQMRAQMPPMISAMTTMRDMMLIWHGTLGAFYKQQARNNKDPGAMGRVFDAAQIDDSFYLPQSAFENPDFKRGLKMFLSPDGKAARFVIALEGDPATPEGISRVEPIKREAREAIKGTPLQGAAIYLGGTAATFKDIREGARYDLLIAGVAAISLILIIMMIITRSVVAAVVIVGTVVLSMGASFGLSVLVWQDILGIELYWMVLAMSVILLLAVGSDYNLLLISRLKEEIGAGLNTGIIRAMAGTGGVVTAAGMVFAVTMSLFVFSDLRIIGQIGTTIGLGLLFDTLVVRSFMTPSIAALLGRWFWWPLRVRPRPASQMLRPFAPRRLVRALLLPSGQHPSATGAHE</sequence>
<dbReference type="EMBL" id="AE000516">
    <property type="protein sequence ID" value="AAK44751.1"/>
    <property type="molecule type" value="Genomic_DNA"/>
</dbReference>
<dbReference type="PIR" id="F70746">
    <property type="entry name" value="F70746"/>
</dbReference>
<dbReference type="RefSeq" id="WP_003898489.1">
    <property type="nucleotide sequence ID" value="NZ_KK341227.1"/>
</dbReference>
<dbReference type="SMR" id="P9WJV6"/>
<dbReference type="KEGG" id="mtc:MT0528"/>
<dbReference type="PATRIC" id="fig|83331.31.peg.560"/>
<dbReference type="HOGENOM" id="CLU_005108_3_2_11"/>
<dbReference type="Proteomes" id="UP000001020">
    <property type="component" value="Chromosome"/>
</dbReference>
<dbReference type="GO" id="GO:0005886">
    <property type="term" value="C:plasma membrane"/>
    <property type="evidence" value="ECO:0007669"/>
    <property type="project" value="UniProtKB-SubCell"/>
</dbReference>
<dbReference type="FunFam" id="1.20.1640.10:FF:000018">
    <property type="entry name" value="Transmembrane transport protein MmpL10"/>
    <property type="match status" value="1"/>
</dbReference>
<dbReference type="FunFam" id="1.20.1640.10:FF:000020">
    <property type="entry name" value="Transmembrane transport protein MmpL10"/>
    <property type="match status" value="1"/>
</dbReference>
<dbReference type="Gene3D" id="1.20.1640.10">
    <property type="entry name" value="Multidrug efflux transporter AcrB transmembrane domain"/>
    <property type="match status" value="2"/>
</dbReference>
<dbReference type="InterPro" id="IPR004869">
    <property type="entry name" value="MMPL_dom"/>
</dbReference>
<dbReference type="InterPro" id="IPR004707">
    <property type="entry name" value="MmpL_fam"/>
</dbReference>
<dbReference type="InterPro" id="IPR050545">
    <property type="entry name" value="Mycobact_MmpL"/>
</dbReference>
<dbReference type="NCBIfam" id="TIGR00833">
    <property type="entry name" value="actII"/>
    <property type="match status" value="1"/>
</dbReference>
<dbReference type="PANTHER" id="PTHR33406">
    <property type="entry name" value="MEMBRANE PROTEIN MJ1562-RELATED"/>
    <property type="match status" value="1"/>
</dbReference>
<dbReference type="PANTHER" id="PTHR33406:SF6">
    <property type="entry name" value="MEMBRANE PROTEIN YDGH-RELATED"/>
    <property type="match status" value="1"/>
</dbReference>
<dbReference type="Pfam" id="PF03176">
    <property type="entry name" value="MMPL"/>
    <property type="match status" value="2"/>
</dbReference>
<dbReference type="SUPFAM" id="SSF82866">
    <property type="entry name" value="Multidrug efflux transporter AcrB transmembrane domain"/>
    <property type="match status" value="2"/>
</dbReference>
<protein>
    <recommendedName>
        <fullName evidence="1">Probable transport protein MmpL2</fullName>
    </recommendedName>
</protein>
<accession>P9WJV6</accession>
<accession>L0T5K7</accession>
<accession>Q11171</accession>
<gene>
    <name type="primary">mmpL2</name>
    <name type="ordered locus">MT0528</name>
</gene>
<keyword id="KW-1003">Cell membrane</keyword>
<keyword id="KW-0472">Membrane</keyword>
<keyword id="KW-1185">Reference proteome</keyword>
<keyword id="KW-0812">Transmembrane</keyword>
<keyword id="KW-1133">Transmembrane helix</keyword>
<keyword id="KW-0813">Transport</keyword>
<reference key="1">
    <citation type="journal article" date="2002" name="J. Bacteriol.">
        <title>Whole-genome comparison of Mycobacterium tuberculosis clinical and laboratory strains.</title>
        <authorList>
            <person name="Fleischmann R.D."/>
            <person name="Alland D."/>
            <person name="Eisen J.A."/>
            <person name="Carpenter L."/>
            <person name="White O."/>
            <person name="Peterson J.D."/>
            <person name="DeBoy R.T."/>
            <person name="Dodson R.J."/>
            <person name="Gwinn M.L."/>
            <person name="Haft D.H."/>
            <person name="Hickey E.K."/>
            <person name="Kolonay J.F."/>
            <person name="Nelson W.C."/>
            <person name="Umayam L.A."/>
            <person name="Ermolaeva M.D."/>
            <person name="Salzberg S.L."/>
            <person name="Delcher A."/>
            <person name="Utterback T.R."/>
            <person name="Weidman J.F."/>
            <person name="Khouri H.M."/>
            <person name="Gill J."/>
            <person name="Mikula A."/>
            <person name="Bishai W."/>
            <person name="Jacobs W.R. Jr."/>
            <person name="Venter J.C."/>
            <person name="Fraser C.M."/>
        </authorList>
    </citation>
    <scope>NUCLEOTIDE SEQUENCE [LARGE SCALE GENOMIC DNA]</scope>
    <source>
        <strain>CDC 1551 / Oshkosh</strain>
    </source>
</reference>
<feature type="chain" id="PRO_0000427763" description="Probable transport protein MmpL2">
    <location>
        <begin position="1"/>
        <end position="968"/>
    </location>
</feature>
<feature type="transmembrane region" description="Helical" evidence="2">
    <location>
        <begin position="22"/>
        <end position="42"/>
    </location>
</feature>
<feature type="transmembrane region" description="Helical" evidence="2">
    <location>
        <begin position="204"/>
        <end position="224"/>
    </location>
</feature>
<feature type="transmembrane region" description="Helical" evidence="2">
    <location>
        <begin position="245"/>
        <end position="265"/>
    </location>
</feature>
<feature type="transmembrane region" description="Helical" evidence="2">
    <location>
        <begin position="297"/>
        <end position="317"/>
    </location>
</feature>
<feature type="transmembrane region" description="Helical" evidence="2">
    <location>
        <begin position="328"/>
        <end position="348"/>
    </location>
</feature>
<feature type="transmembrane region" description="Helical" evidence="2">
    <location>
        <begin position="378"/>
        <end position="398"/>
    </location>
</feature>
<feature type="transmembrane region" description="Helical" evidence="2">
    <location>
        <begin position="763"/>
        <end position="783"/>
    </location>
</feature>
<feature type="transmembrane region" description="Helical" evidence="2">
    <location>
        <begin position="787"/>
        <end position="807"/>
    </location>
</feature>
<feature type="transmembrane region" description="Helical" evidence="2">
    <location>
        <begin position="815"/>
        <end position="835"/>
    </location>
</feature>
<feature type="transmembrane region" description="Helical" evidence="2">
    <location>
        <begin position="866"/>
        <end position="886"/>
    </location>
</feature>
<feature type="transmembrane region" description="Helical" evidence="2">
    <location>
        <begin position="890"/>
        <end position="910"/>
    </location>
</feature>
<organism>
    <name type="scientific">Mycobacterium tuberculosis (strain CDC 1551 / Oshkosh)</name>
    <dbReference type="NCBI Taxonomy" id="83331"/>
    <lineage>
        <taxon>Bacteria</taxon>
        <taxon>Bacillati</taxon>
        <taxon>Actinomycetota</taxon>
        <taxon>Actinomycetes</taxon>
        <taxon>Mycobacteriales</taxon>
        <taxon>Mycobacteriaceae</taxon>
        <taxon>Mycobacterium</taxon>
        <taxon>Mycobacterium tuberculosis complex</taxon>
    </lineage>
</organism>
<evidence type="ECO:0000250" key="1">
    <source>
        <dbReference type="UniProtKB" id="P9WJV7"/>
    </source>
</evidence>
<evidence type="ECO:0000255" key="2"/>
<evidence type="ECO:0000305" key="3"/>
<comment type="subcellular location">
    <subcellularLocation>
        <location evidence="3">Cell membrane</location>
        <topology evidence="2">Multi-pass membrane protein</topology>
    </subcellularLocation>
</comment>
<comment type="similarity">
    <text evidence="3">Belongs to the resistance-nodulation-cell division (RND) (TC 2.A.6) family. MmpL subfamily.</text>
</comment>
<name>MMPL2_MYCTO</name>